<reference key="1">
    <citation type="submission" date="2006-03" db="EMBL/GenBank/DDBJ databases">
        <title>Complete sequence of Shewanella denitrificans OS217.</title>
        <authorList>
            <consortium name="US DOE Joint Genome Institute"/>
            <person name="Copeland A."/>
            <person name="Lucas S."/>
            <person name="Lapidus A."/>
            <person name="Barry K."/>
            <person name="Detter J.C."/>
            <person name="Glavina del Rio T."/>
            <person name="Hammon N."/>
            <person name="Israni S."/>
            <person name="Dalin E."/>
            <person name="Tice H."/>
            <person name="Pitluck S."/>
            <person name="Brettin T."/>
            <person name="Bruce D."/>
            <person name="Han C."/>
            <person name="Tapia R."/>
            <person name="Gilna P."/>
            <person name="Kiss H."/>
            <person name="Schmutz J."/>
            <person name="Larimer F."/>
            <person name="Land M."/>
            <person name="Hauser L."/>
            <person name="Kyrpides N."/>
            <person name="Lykidis A."/>
            <person name="Richardson P."/>
        </authorList>
    </citation>
    <scope>NUCLEOTIDE SEQUENCE [LARGE SCALE GENOMIC DNA]</scope>
    <source>
        <strain>OS217 / ATCC BAA-1090 / DSM 15013</strain>
    </source>
</reference>
<sequence length="92" mass="10062">MARVTVEDAVDQIGNRFDMILVAARRARQIAVQGKDPMVDEMNDKPTVIALREIELGLVNATTLDADERQTVRDREAAEVAAVSAIAEGRTL</sequence>
<dbReference type="EC" id="2.7.7.6" evidence="1"/>
<dbReference type="EMBL" id="CP000302">
    <property type="protein sequence ID" value="ABE56709.1"/>
    <property type="molecule type" value="Genomic_DNA"/>
</dbReference>
<dbReference type="RefSeq" id="WP_011497851.1">
    <property type="nucleotide sequence ID" value="NC_007954.1"/>
</dbReference>
<dbReference type="SMR" id="Q12IL7"/>
<dbReference type="STRING" id="318161.Sden_3434"/>
<dbReference type="KEGG" id="sdn:Sden_3434"/>
<dbReference type="eggNOG" id="COG1758">
    <property type="taxonomic scope" value="Bacteria"/>
</dbReference>
<dbReference type="HOGENOM" id="CLU_125406_5_3_6"/>
<dbReference type="OrthoDB" id="9796300at2"/>
<dbReference type="Proteomes" id="UP000001982">
    <property type="component" value="Chromosome"/>
</dbReference>
<dbReference type="GO" id="GO:0000428">
    <property type="term" value="C:DNA-directed RNA polymerase complex"/>
    <property type="evidence" value="ECO:0007669"/>
    <property type="project" value="UniProtKB-KW"/>
</dbReference>
<dbReference type="GO" id="GO:0003677">
    <property type="term" value="F:DNA binding"/>
    <property type="evidence" value="ECO:0007669"/>
    <property type="project" value="UniProtKB-UniRule"/>
</dbReference>
<dbReference type="GO" id="GO:0003899">
    <property type="term" value="F:DNA-directed RNA polymerase activity"/>
    <property type="evidence" value="ECO:0007669"/>
    <property type="project" value="UniProtKB-UniRule"/>
</dbReference>
<dbReference type="GO" id="GO:0006351">
    <property type="term" value="P:DNA-templated transcription"/>
    <property type="evidence" value="ECO:0007669"/>
    <property type="project" value="UniProtKB-UniRule"/>
</dbReference>
<dbReference type="Gene3D" id="3.90.940.10">
    <property type="match status" value="1"/>
</dbReference>
<dbReference type="HAMAP" id="MF_00366">
    <property type="entry name" value="RNApol_bact_RpoZ"/>
    <property type="match status" value="1"/>
</dbReference>
<dbReference type="InterPro" id="IPR003716">
    <property type="entry name" value="DNA-dir_RNA_pol_omega"/>
</dbReference>
<dbReference type="InterPro" id="IPR006110">
    <property type="entry name" value="Pol_omega/Rpo6/RPB6"/>
</dbReference>
<dbReference type="InterPro" id="IPR036161">
    <property type="entry name" value="RPB6/omega-like_sf"/>
</dbReference>
<dbReference type="NCBIfam" id="TIGR00690">
    <property type="entry name" value="rpoZ"/>
    <property type="match status" value="1"/>
</dbReference>
<dbReference type="PANTHER" id="PTHR34476">
    <property type="entry name" value="DNA-DIRECTED RNA POLYMERASE SUBUNIT OMEGA"/>
    <property type="match status" value="1"/>
</dbReference>
<dbReference type="PANTHER" id="PTHR34476:SF1">
    <property type="entry name" value="DNA-DIRECTED RNA POLYMERASE SUBUNIT OMEGA"/>
    <property type="match status" value="1"/>
</dbReference>
<dbReference type="Pfam" id="PF01192">
    <property type="entry name" value="RNA_pol_Rpb6"/>
    <property type="match status" value="1"/>
</dbReference>
<dbReference type="SMART" id="SM01409">
    <property type="entry name" value="RNA_pol_Rpb6"/>
    <property type="match status" value="1"/>
</dbReference>
<dbReference type="SUPFAM" id="SSF63562">
    <property type="entry name" value="RPB6/omega subunit-like"/>
    <property type="match status" value="1"/>
</dbReference>
<gene>
    <name evidence="1" type="primary">rpoZ</name>
    <name type="ordered locus">Sden_3434</name>
</gene>
<feature type="chain" id="PRO_1000006009" description="DNA-directed RNA polymerase subunit omega">
    <location>
        <begin position="1"/>
        <end position="92"/>
    </location>
</feature>
<name>RPOZ_SHEDO</name>
<organism>
    <name type="scientific">Shewanella denitrificans (strain OS217 / ATCC BAA-1090 / DSM 15013)</name>
    <dbReference type="NCBI Taxonomy" id="318161"/>
    <lineage>
        <taxon>Bacteria</taxon>
        <taxon>Pseudomonadati</taxon>
        <taxon>Pseudomonadota</taxon>
        <taxon>Gammaproteobacteria</taxon>
        <taxon>Alteromonadales</taxon>
        <taxon>Shewanellaceae</taxon>
        <taxon>Shewanella</taxon>
    </lineage>
</organism>
<keyword id="KW-0240">DNA-directed RNA polymerase</keyword>
<keyword id="KW-0548">Nucleotidyltransferase</keyword>
<keyword id="KW-1185">Reference proteome</keyword>
<keyword id="KW-0804">Transcription</keyword>
<keyword id="KW-0808">Transferase</keyword>
<accession>Q12IL7</accession>
<comment type="function">
    <text evidence="1">Promotes RNA polymerase assembly. Latches the N- and C-terminal regions of the beta' subunit thereby facilitating its interaction with the beta and alpha subunits.</text>
</comment>
<comment type="catalytic activity">
    <reaction evidence="1">
        <text>RNA(n) + a ribonucleoside 5'-triphosphate = RNA(n+1) + diphosphate</text>
        <dbReference type="Rhea" id="RHEA:21248"/>
        <dbReference type="Rhea" id="RHEA-COMP:14527"/>
        <dbReference type="Rhea" id="RHEA-COMP:17342"/>
        <dbReference type="ChEBI" id="CHEBI:33019"/>
        <dbReference type="ChEBI" id="CHEBI:61557"/>
        <dbReference type="ChEBI" id="CHEBI:140395"/>
        <dbReference type="EC" id="2.7.7.6"/>
    </reaction>
</comment>
<comment type="subunit">
    <text evidence="1">The RNAP catalytic core consists of 2 alpha, 1 beta, 1 beta' and 1 omega subunit. When a sigma factor is associated with the core the holoenzyme is formed, which can initiate transcription.</text>
</comment>
<comment type="similarity">
    <text evidence="1">Belongs to the RNA polymerase subunit omega family.</text>
</comment>
<evidence type="ECO:0000255" key="1">
    <source>
        <dbReference type="HAMAP-Rule" id="MF_00366"/>
    </source>
</evidence>
<proteinExistence type="inferred from homology"/>
<protein>
    <recommendedName>
        <fullName evidence="1">DNA-directed RNA polymerase subunit omega</fullName>
        <shortName evidence="1">RNAP omega subunit</shortName>
        <ecNumber evidence="1">2.7.7.6</ecNumber>
    </recommendedName>
    <alternativeName>
        <fullName evidence="1">RNA polymerase omega subunit</fullName>
    </alternativeName>
    <alternativeName>
        <fullName evidence="1">Transcriptase subunit omega</fullName>
    </alternativeName>
</protein>